<protein>
    <recommendedName>
        <fullName evidence="5">Ethanolamine kinase 1</fullName>
        <shortName evidence="3">EKI 1</shortName>
        <ecNumber>2.7.1.82</ecNumber>
    </recommendedName>
</protein>
<keyword id="KW-0025">Alternative splicing</keyword>
<keyword id="KW-0067">ATP-binding</keyword>
<keyword id="KW-0963">Cytoplasm</keyword>
<keyword id="KW-0418">Kinase</keyword>
<keyword id="KW-0444">Lipid biosynthesis</keyword>
<keyword id="KW-0443">Lipid metabolism</keyword>
<keyword id="KW-0547">Nucleotide-binding</keyword>
<keyword id="KW-0594">Phospholipid biosynthesis</keyword>
<keyword id="KW-1208">Phospholipid metabolism</keyword>
<keyword id="KW-1267">Proteomics identification</keyword>
<keyword id="KW-1185">Reference proteome</keyword>
<keyword id="KW-0808">Transferase</keyword>
<gene>
    <name evidence="7" type="primary">ETNK1</name>
    <name evidence="3" type="synonym">EKI1</name>
</gene>
<dbReference type="EC" id="2.7.1.82"/>
<dbReference type="EMBL" id="AF207600">
    <property type="protein sequence ID" value="AAF71220.2"/>
    <property type="molecule type" value="mRNA"/>
</dbReference>
<dbReference type="EMBL" id="AC087241">
    <property type="status" value="NOT_ANNOTATED_CDS"/>
    <property type="molecule type" value="Genomic_DNA"/>
</dbReference>
<dbReference type="EMBL" id="CH471094">
    <property type="protein sequence ID" value="EAW96479.1"/>
    <property type="molecule type" value="Genomic_DNA"/>
</dbReference>
<dbReference type="EMBL" id="BC006111">
    <property type="protein sequence ID" value="AAH06111.2"/>
    <property type="molecule type" value="mRNA"/>
</dbReference>
<dbReference type="EMBL" id="BC066907">
    <property type="protein sequence ID" value="AAH66907.1"/>
    <property type="molecule type" value="mRNA"/>
</dbReference>
<dbReference type="RefSeq" id="NP_001034570.1">
    <property type="nucleotide sequence ID" value="NM_001039481.1"/>
</dbReference>
<dbReference type="RefSeq" id="NP_061108.2">
    <property type="nucleotide sequence ID" value="NM_018638.4"/>
</dbReference>
<dbReference type="SMR" id="Q9HBU6"/>
<dbReference type="BioGRID" id="120680">
    <property type="interactions" value="24"/>
</dbReference>
<dbReference type="FunCoup" id="Q9HBU6">
    <property type="interactions" value="3434"/>
</dbReference>
<dbReference type="IntAct" id="Q9HBU6">
    <property type="interactions" value="19"/>
</dbReference>
<dbReference type="STRING" id="9606.ENSP00000500633"/>
<dbReference type="SwissLipids" id="SLP:000001769">
    <molecule id="Q9HBU6-1"/>
</dbReference>
<dbReference type="GlyGen" id="Q9HBU6">
    <property type="glycosylation" value="2 sites, 2 N-linked glycans (2 sites)"/>
</dbReference>
<dbReference type="iPTMnet" id="Q9HBU6"/>
<dbReference type="PhosphoSitePlus" id="Q9HBU6"/>
<dbReference type="BioMuta" id="ETNK1"/>
<dbReference type="DMDM" id="14194724"/>
<dbReference type="jPOST" id="Q9HBU6"/>
<dbReference type="MassIVE" id="Q9HBU6"/>
<dbReference type="PaxDb" id="9606-ENSP00000266517"/>
<dbReference type="PeptideAtlas" id="Q9HBU6"/>
<dbReference type="ProteomicsDB" id="33849"/>
<dbReference type="ProteomicsDB" id="81595">
    <molecule id="Q9HBU6-1"/>
</dbReference>
<dbReference type="Pumba" id="Q9HBU6"/>
<dbReference type="Antibodypedia" id="24166">
    <property type="antibodies" value="207 antibodies from 22 providers"/>
</dbReference>
<dbReference type="DNASU" id="55500"/>
<dbReference type="Ensembl" id="ENST00000671733.1">
    <molecule id="Q9HBU6-1"/>
    <property type="protein sequence ID" value="ENSP00000500633.1"/>
    <property type="gene ID" value="ENSG00000139163.16"/>
</dbReference>
<dbReference type="Ensembl" id="ENST00000672951.1">
    <molecule id="Q9HBU6-2"/>
    <property type="protein sequence ID" value="ENSP00000499814.1"/>
    <property type="gene ID" value="ENSG00000139163.16"/>
</dbReference>
<dbReference type="GeneID" id="55500"/>
<dbReference type="KEGG" id="hsa:55500"/>
<dbReference type="UCSC" id="uc001rfs.4">
    <molecule id="Q9HBU6-1"/>
    <property type="organism name" value="human"/>
</dbReference>
<dbReference type="AGR" id="HGNC:24649"/>
<dbReference type="CTD" id="55500"/>
<dbReference type="DisGeNET" id="55500"/>
<dbReference type="GeneCards" id="ETNK1"/>
<dbReference type="HGNC" id="HGNC:24649">
    <property type="gene designation" value="ETNK1"/>
</dbReference>
<dbReference type="HPA" id="ENSG00000139163">
    <property type="expression patterns" value="Low tissue specificity"/>
</dbReference>
<dbReference type="MalaCards" id="ETNK1"/>
<dbReference type="MIM" id="609858">
    <property type="type" value="gene"/>
</dbReference>
<dbReference type="neXtProt" id="NX_Q9HBU6"/>
<dbReference type="OpenTargets" id="ENSG00000139163"/>
<dbReference type="PharmGKB" id="PA134921265"/>
<dbReference type="VEuPathDB" id="HostDB:ENSG00000139163"/>
<dbReference type="eggNOG" id="KOG4720">
    <property type="taxonomic scope" value="Eukaryota"/>
</dbReference>
<dbReference type="GeneTree" id="ENSGT00950000182939"/>
<dbReference type="HOGENOM" id="CLU_012712_1_0_1"/>
<dbReference type="InParanoid" id="Q9HBU6"/>
<dbReference type="OrthoDB" id="10267235at2759"/>
<dbReference type="PAN-GO" id="Q9HBU6">
    <property type="GO annotations" value="3 GO annotations based on evolutionary models"/>
</dbReference>
<dbReference type="PhylomeDB" id="Q9HBU6"/>
<dbReference type="TreeFam" id="TF313549"/>
<dbReference type="BioCyc" id="MetaCyc:HS06586-MONOMER"/>
<dbReference type="BRENDA" id="2.7.1.82">
    <property type="organism ID" value="2681"/>
</dbReference>
<dbReference type="PathwayCommons" id="Q9HBU6"/>
<dbReference type="Reactome" id="R-HSA-1483213">
    <property type="pathway name" value="Synthesis of PE"/>
</dbReference>
<dbReference type="SignaLink" id="Q9HBU6"/>
<dbReference type="SIGNOR" id="Q9HBU6"/>
<dbReference type="UniPathway" id="UPA00558">
    <property type="reaction ID" value="UER00741"/>
</dbReference>
<dbReference type="BioGRID-ORCS" id="55500">
    <property type="hits" value="37 hits in 1162 CRISPR screens"/>
</dbReference>
<dbReference type="ChiTaRS" id="ETNK1">
    <property type="organism name" value="human"/>
</dbReference>
<dbReference type="GenomeRNAi" id="55500"/>
<dbReference type="Pharos" id="Q9HBU6">
    <property type="development level" value="Tbio"/>
</dbReference>
<dbReference type="PRO" id="PR:Q9HBU6"/>
<dbReference type="Proteomes" id="UP000005640">
    <property type="component" value="Chromosome 12"/>
</dbReference>
<dbReference type="RNAct" id="Q9HBU6">
    <property type="molecule type" value="protein"/>
</dbReference>
<dbReference type="Bgee" id="ENSG00000139163">
    <property type="expression patterns" value="Expressed in jejunal mucosa and 189 other cell types or tissues"/>
</dbReference>
<dbReference type="ExpressionAtlas" id="Q9HBU6">
    <property type="expression patterns" value="baseline and differential"/>
</dbReference>
<dbReference type="GO" id="GO:0005737">
    <property type="term" value="C:cytoplasm"/>
    <property type="evidence" value="ECO:0000314"/>
    <property type="project" value="UniProt"/>
</dbReference>
<dbReference type="GO" id="GO:0005829">
    <property type="term" value="C:cytosol"/>
    <property type="evidence" value="ECO:0000304"/>
    <property type="project" value="Reactome"/>
</dbReference>
<dbReference type="GO" id="GO:0016020">
    <property type="term" value="C:membrane"/>
    <property type="evidence" value="ECO:0007005"/>
    <property type="project" value="UniProtKB"/>
</dbReference>
<dbReference type="GO" id="GO:0005524">
    <property type="term" value="F:ATP binding"/>
    <property type="evidence" value="ECO:0007669"/>
    <property type="project" value="UniProtKB-KW"/>
</dbReference>
<dbReference type="GO" id="GO:0004305">
    <property type="term" value="F:ethanolamine kinase activity"/>
    <property type="evidence" value="ECO:0000314"/>
    <property type="project" value="UniProtKB"/>
</dbReference>
<dbReference type="GO" id="GO:0006646">
    <property type="term" value="P:phosphatidylethanolamine biosynthetic process"/>
    <property type="evidence" value="ECO:0000314"/>
    <property type="project" value="UniProtKB"/>
</dbReference>
<dbReference type="CDD" id="cd05157">
    <property type="entry name" value="ETNK_euk"/>
    <property type="match status" value="1"/>
</dbReference>
<dbReference type="FunFam" id="3.90.1200.10:FF:000002">
    <property type="entry name" value="Ethanolamine kinase 1"/>
    <property type="match status" value="1"/>
</dbReference>
<dbReference type="Gene3D" id="3.90.1200.10">
    <property type="match status" value="1"/>
</dbReference>
<dbReference type="Gene3D" id="3.30.200.20">
    <property type="entry name" value="Phosphorylase Kinase, domain 1"/>
    <property type="match status" value="1"/>
</dbReference>
<dbReference type="InterPro" id="IPR011009">
    <property type="entry name" value="Kinase-like_dom_sf"/>
</dbReference>
<dbReference type="PANTHER" id="PTHR22603">
    <property type="entry name" value="CHOLINE/ETHANOALAMINE KINASE"/>
    <property type="match status" value="1"/>
</dbReference>
<dbReference type="PANTHER" id="PTHR22603:SF91">
    <property type="entry name" value="ETHANOLAMINE KINASE 1"/>
    <property type="match status" value="1"/>
</dbReference>
<dbReference type="Pfam" id="PF01633">
    <property type="entry name" value="Choline_kinase"/>
    <property type="match status" value="1"/>
</dbReference>
<dbReference type="SUPFAM" id="SSF56112">
    <property type="entry name" value="Protein kinase-like (PK-like)"/>
    <property type="match status" value="1"/>
</dbReference>
<accession>Q9HBU6</accession>
<accession>G5E969</accession>
<proteinExistence type="evidence at protein level"/>
<organism>
    <name type="scientific">Homo sapiens</name>
    <name type="common">Human</name>
    <dbReference type="NCBI Taxonomy" id="9606"/>
    <lineage>
        <taxon>Eukaryota</taxon>
        <taxon>Metazoa</taxon>
        <taxon>Chordata</taxon>
        <taxon>Craniata</taxon>
        <taxon>Vertebrata</taxon>
        <taxon>Euteleostomi</taxon>
        <taxon>Mammalia</taxon>
        <taxon>Eutheria</taxon>
        <taxon>Euarchontoglires</taxon>
        <taxon>Primates</taxon>
        <taxon>Haplorrhini</taxon>
        <taxon>Catarrhini</taxon>
        <taxon>Hominidae</taxon>
        <taxon>Homo</taxon>
    </lineage>
</organism>
<feature type="chain" id="PRO_0000206227" description="Ethanolamine kinase 1">
    <location>
        <begin position="1"/>
        <end position="452"/>
    </location>
</feature>
<feature type="region of interest" description="Disordered" evidence="1">
    <location>
        <begin position="26"/>
        <end position="64"/>
    </location>
</feature>
<feature type="compositionally biased region" description="Pro residues" evidence="1">
    <location>
        <begin position="43"/>
        <end position="53"/>
    </location>
</feature>
<feature type="splice variant" id="VSP_047191" description="In isoform 2." evidence="4">
    <original>RLIARQLAKIHAIHAHNGWIPKSNLWLKMGKYFSLIPTGFADEDINKRFLSDIPSSQILQEEMTWMKEILSNLGSPVVLCHNDLLCKNIIYNEKQGDVQFIDYEYSGYNYLAYDIGNHFNEFAGVSDVDYSLYPDRELQSQWLRAYLEAYKEFKGFGTEVTEKEVEILFIQVNQFALASHFFWGLWALIQAKYSTIEFDFLGYAIVRFNQYFKMKPEVTALKVPE</original>
    <variation>SLSSLTLCKGKTTRCFGLTGCRGSRLLLSFF</variation>
    <location>
        <begin position="228"/>
        <end position="452"/>
    </location>
</feature>
<comment type="function">
    <text evidence="2">Highly specific for ethanolamine phosphorylation. May be a rate-controlling step in phosphatidylethanolamine biosynthesis.</text>
</comment>
<comment type="catalytic activity">
    <reaction evidence="2">
        <text>ethanolamine + ATP = phosphoethanolamine + ADP + H(+)</text>
        <dbReference type="Rhea" id="RHEA:13069"/>
        <dbReference type="ChEBI" id="CHEBI:15378"/>
        <dbReference type="ChEBI" id="CHEBI:30616"/>
        <dbReference type="ChEBI" id="CHEBI:57603"/>
        <dbReference type="ChEBI" id="CHEBI:58190"/>
        <dbReference type="ChEBI" id="CHEBI:456216"/>
        <dbReference type="EC" id="2.7.1.82"/>
    </reaction>
    <physiologicalReaction direction="left-to-right" evidence="2">
        <dbReference type="Rhea" id="RHEA:13070"/>
    </physiologicalReaction>
</comment>
<comment type="pathway">
    <text evidence="2">Phospholipid metabolism; phosphatidylethanolamine biosynthesis; phosphatidylethanolamine from ethanolamine: step 1/3.</text>
</comment>
<comment type="interaction">
    <interactant intactId="EBI-2834493">
        <id>Q9HBU6</id>
    </interactant>
    <interactant intactId="EBI-1748958">
        <id>P49069</id>
        <label>CAMLG</label>
    </interactant>
    <organismsDiffer>false</organismsDiffer>
    <experiments>3</experiments>
</comment>
<comment type="interaction">
    <interactant intactId="EBI-2834493">
        <id>Q9HBU6</id>
    </interactant>
    <interactant intactId="EBI-347996">
        <id>O43765</id>
        <label>SGTA</label>
    </interactant>
    <organismsDiffer>false</organismsDiffer>
    <experiments>3</experiments>
</comment>
<comment type="interaction">
    <interactant intactId="EBI-2834493">
        <id>Q9HBU6</id>
    </interactant>
    <interactant intactId="EBI-744081">
        <id>Q96EQ0</id>
        <label>SGTB</label>
    </interactant>
    <organismsDiffer>false</organismsDiffer>
    <experiments>3</experiments>
</comment>
<comment type="interaction">
    <interactant intactId="EBI-2834493">
        <id>Q9HBU6</id>
    </interactant>
    <interactant intactId="EBI-12266756">
        <id>Q86UW2</id>
        <label>SLC51B</label>
    </interactant>
    <organismsDiffer>false</organismsDiffer>
    <experiments>3</experiments>
</comment>
<comment type="interaction">
    <interactant intactId="EBI-2834493">
        <id>Q9HBU6</id>
    </interactant>
    <interactant intactId="EBI-741480">
        <id>Q9UMX0</id>
        <label>UBQLN1</label>
    </interactant>
    <organismsDiffer>false</organismsDiffer>
    <experiments>3</experiments>
</comment>
<comment type="interaction">
    <interactant intactId="EBI-2834493">
        <id>Q9HBU6</id>
    </interactant>
    <interactant intactId="EBI-10173939">
        <id>Q9UMX0-2</id>
        <label>UBQLN1</label>
    </interactant>
    <organismsDiffer>false</organismsDiffer>
    <experiments>3</experiments>
</comment>
<comment type="interaction">
    <interactant intactId="EBI-2834493">
        <id>Q9HBU6</id>
    </interactant>
    <interactant intactId="EBI-947187">
        <id>Q9UHD9</id>
        <label>UBQLN2</label>
    </interactant>
    <organismsDiffer>false</organismsDiffer>
    <experiments>3</experiments>
</comment>
<comment type="subcellular location">
    <subcellularLocation>
        <location evidence="6">Cytoplasm</location>
    </subcellularLocation>
</comment>
<comment type="alternative products">
    <event type="alternative splicing"/>
    <isoform>
        <id>Q9HBU6-1</id>
        <name>1</name>
        <sequence type="displayed"/>
    </isoform>
    <isoform>
        <id>Q9HBU6-2</id>
        <name>2</name>
        <sequence type="described" ref="VSP_047191"/>
    </isoform>
</comment>
<comment type="tissue specificity">
    <text evidence="2">Expressed in kidney, liver, placenta, heart, leukocyte, ovary and testis.</text>
</comment>
<comment type="similarity">
    <text evidence="5">Belongs to the choline/ethanolamine kinase family.</text>
</comment>
<name>EKI1_HUMAN</name>
<reference key="1">
    <citation type="journal article" date="2001" name="J. Biol. Chem.">
        <title>Overexpression of a mammalian ethanolamine-specific kinase accelerates the CDP-ethanolamine pathway.</title>
        <authorList>
            <person name="Lykidis A."/>
            <person name="Wang J."/>
            <person name="Karim M.A."/>
            <person name="Jackowski S."/>
        </authorList>
    </citation>
    <scope>NUCLEOTIDE SEQUENCE [MRNA] (ISOFORM 1)</scope>
    <scope>FUNCTION</scope>
    <scope>CATALYTIC ACTIVITY</scope>
    <scope>TISSUE SPECIFICITY</scope>
    <scope>SUBCELLULAR LOCATION</scope>
</reference>
<reference key="2">
    <citation type="journal article" date="2006" name="Nature">
        <title>The finished DNA sequence of human chromosome 12.</title>
        <authorList>
            <person name="Scherer S.E."/>
            <person name="Muzny D.M."/>
            <person name="Buhay C.J."/>
            <person name="Chen R."/>
            <person name="Cree A."/>
            <person name="Ding Y."/>
            <person name="Dugan-Rocha S."/>
            <person name="Gill R."/>
            <person name="Gunaratne P."/>
            <person name="Harris R.A."/>
            <person name="Hawes A.C."/>
            <person name="Hernandez J."/>
            <person name="Hodgson A.V."/>
            <person name="Hume J."/>
            <person name="Jackson A."/>
            <person name="Khan Z.M."/>
            <person name="Kovar-Smith C."/>
            <person name="Lewis L.R."/>
            <person name="Lozado R.J."/>
            <person name="Metzker M.L."/>
            <person name="Milosavljevic A."/>
            <person name="Miner G.R."/>
            <person name="Montgomery K.T."/>
            <person name="Morgan M.B."/>
            <person name="Nazareth L.V."/>
            <person name="Scott G."/>
            <person name="Sodergren E."/>
            <person name="Song X.-Z."/>
            <person name="Steffen D."/>
            <person name="Lovering R.C."/>
            <person name="Wheeler D.A."/>
            <person name="Worley K.C."/>
            <person name="Yuan Y."/>
            <person name="Zhang Z."/>
            <person name="Adams C.Q."/>
            <person name="Ansari-Lari M.A."/>
            <person name="Ayele M."/>
            <person name="Brown M.J."/>
            <person name="Chen G."/>
            <person name="Chen Z."/>
            <person name="Clerc-Blankenburg K.P."/>
            <person name="Davis C."/>
            <person name="Delgado O."/>
            <person name="Dinh H.H."/>
            <person name="Draper H."/>
            <person name="Gonzalez-Garay M.L."/>
            <person name="Havlak P."/>
            <person name="Jackson L.R."/>
            <person name="Jacob L.S."/>
            <person name="Kelly S.H."/>
            <person name="Li L."/>
            <person name="Li Z."/>
            <person name="Liu J."/>
            <person name="Liu W."/>
            <person name="Lu J."/>
            <person name="Maheshwari M."/>
            <person name="Nguyen B.-V."/>
            <person name="Okwuonu G.O."/>
            <person name="Pasternak S."/>
            <person name="Perez L.M."/>
            <person name="Plopper F.J.H."/>
            <person name="Santibanez J."/>
            <person name="Shen H."/>
            <person name="Tabor P.E."/>
            <person name="Verduzco D."/>
            <person name="Waldron L."/>
            <person name="Wang Q."/>
            <person name="Williams G.A."/>
            <person name="Zhang J."/>
            <person name="Zhou J."/>
            <person name="Allen C.C."/>
            <person name="Amin A.G."/>
            <person name="Anyalebechi V."/>
            <person name="Bailey M."/>
            <person name="Barbaria J.A."/>
            <person name="Bimage K.E."/>
            <person name="Bryant N.P."/>
            <person name="Burch P.E."/>
            <person name="Burkett C.E."/>
            <person name="Burrell K.L."/>
            <person name="Calderon E."/>
            <person name="Cardenas V."/>
            <person name="Carter K."/>
            <person name="Casias K."/>
            <person name="Cavazos I."/>
            <person name="Cavazos S.R."/>
            <person name="Ceasar H."/>
            <person name="Chacko J."/>
            <person name="Chan S.N."/>
            <person name="Chavez D."/>
            <person name="Christopoulos C."/>
            <person name="Chu J."/>
            <person name="Cockrell R."/>
            <person name="Cox C.D."/>
            <person name="Dang M."/>
            <person name="Dathorne S.R."/>
            <person name="David R."/>
            <person name="Davis C.M."/>
            <person name="Davy-Carroll L."/>
            <person name="Deshazo D.R."/>
            <person name="Donlin J.E."/>
            <person name="D'Souza L."/>
            <person name="Eaves K.A."/>
            <person name="Egan A."/>
            <person name="Emery-Cohen A.J."/>
            <person name="Escotto M."/>
            <person name="Flagg N."/>
            <person name="Forbes L.D."/>
            <person name="Gabisi A.M."/>
            <person name="Garza M."/>
            <person name="Hamilton C."/>
            <person name="Henderson N."/>
            <person name="Hernandez O."/>
            <person name="Hines S."/>
            <person name="Hogues M.E."/>
            <person name="Huang M."/>
            <person name="Idlebird D.G."/>
            <person name="Johnson R."/>
            <person name="Jolivet A."/>
            <person name="Jones S."/>
            <person name="Kagan R."/>
            <person name="King L.M."/>
            <person name="Leal B."/>
            <person name="Lebow H."/>
            <person name="Lee S."/>
            <person name="LeVan J.M."/>
            <person name="Lewis L.C."/>
            <person name="London P."/>
            <person name="Lorensuhewa L.M."/>
            <person name="Loulseged H."/>
            <person name="Lovett D.A."/>
            <person name="Lucier A."/>
            <person name="Lucier R.L."/>
            <person name="Ma J."/>
            <person name="Madu R.C."/>
            <person name="Mapua P."/>
            <person name="Martindale A.D."/>
            <person name="Martinez E."/>
            <person name="Massey E."/>
            <person name="Mawhiney S."/>
            <person name="Meador M.G."/>
            <person name="Mendez S."/>
            <person name="Mercado C."/>
            <person name="Mercado I.C."/>
            <person name="Merritt C.E."/>
            <person name="Miner Z.L."/>
            <person name="Minja E."/>
            <person name="Mitchell T."/>
            <person name="Mohabbat F."/>
            <person name="Mohabbat K."/>
            <person name="Montgomery B."/>
            <person name="Moore N."/>
            <person name="Morris S."/>
            <person name="Munidasa M."/>
            <person name="Ngo R.N."/>
            <person name="Nguyen N.B."/>
            <person name="Nickerson E."/>
            <person name="Nwaokelemeh O.O."/>
            <person name="Nwokenkwo S."/>
            <person name="Obregon M."/>
            <person name="Oguh M."/>
            <person name="Oragunye N."/>
            <person name="Oviedo R.J."/>
            <person name="Parish B.J."/>
            <person name="Parker D.N."/>
            <person name="Parrish J."/>
            <person name="Parks K.L."/>
            <person name="Paul H.A."/>
            <person name="Payton B.A."/>
            <person name="Perez A."/>
            <person name="Perrin W."/>
            <person name="Pickens A."/>
            <person name="Primus E.L."/>
            <person name="Pu L.-L."/>
            <person name="Puazo M."/>
            <person name="Quiles M.M."/>
            <person name="Quiroz J.B."/>
            <person name="Rabata D."/>
            <person name="Reeves K."/>
            <person name="Ruiz S.J."/>
            <person name="Shao H."/>
            <person name="Sisson I."/>
            <person name="Sonaike T."/>
            <person name="Sorelle R.P."/>
            <person name="Sutton A.E."/>
            <person name="Svatek A.F."/>
            <person name="Svetz L.A."/>
            <person name="Tamerisa K.S."/>
            <person name="Taylor T.R."/>
            <person name="Teague B."/>
            <person name="Thomas N."/>
            <person name="Thorn R.D."/>
            <person name="Trejos Z.Y."/>
            <person name="Trevino B.K."/>
            <person name="Ukegbu O.N."/>
            <person name="Urban J.B."/>
            <person name="Vasquez L.I."/>
            <person name="Vera V.A."/>
            <person name="Villasana D.M."/>
            <person name="Wang L."/>
            <person name="Ward-Moore S."/>
            <person name="Warren J.T."/>
            <person name="Wei X."/>
            <person name="White F."/>
            <person name="Williamson A.L."/>
            <person name="Wleczyk R."/>
            <person name="Wooden H.S."/>
            <person name="Wooden S.H."/>
            <person name="Yen J."/>
            <person name="Yoon L."/>
            <person name="Yoon V."/>
            <person name="Zorrilla S.E."/>
            <person name="Nelson D."/>
            <person name="Kucherlapati R."/>
            <person name="Weinstock G."/>
            <person name="Gibbs R.A."/>
        </authorList>
    </citation>
    <scope>NUCLEOTIDE SEQUENCE [LARGE SCALE GENOMIC DNA]</scope>
</reference>
<reference key="3">
    <citation type="submission" date="2005-07" db="EMBL/GenBank/DDBJ databases">
        <authorList>
            <person name="Mural R.J."/>
            <person name="Istrail S."/>
            <person name="Sutton G.G."/>
            <person name="Florea L."/>
            <person name="Halpern A.L."/>
            <person name="Mobarry C.M."/>
            <person name="Lippert R."/>
            <person name="Walenz B."/>
            <person name="Shatkay H."/>
            <person name="Dew I."/>
            <person name="Miller J.R."/>
            <person name="Flanigan M.J."/>
            <person name="Edwards N.J."/>
            <person name="Bolanos R."/>
            <person name="Fasulo D."/>
            <person name="Halldorsson B.V."/>
            <person name="Hannenhalli S."/>
            <person name="Turner R."/>
            <person name="Yooseph S."/>
            <person name="Lu F."/>
            <person name="Nusskern D.R."/>
            <person name="Shue B.C."/>
            <person name="Zheng X.H."/>
            <person name="Zhong F."/>
            <person name="Delcher A.L."/>
            <person name="Huson D.H."/>
            <person name="Kravitz S.A."/>
            <person name="Mouchard L."/>
            <person name="Reinert K."/>
            <person name="Remington K.A."/>
            <person name="Clark A.G."/>
            <person name="Waterman M.S."/>
            <person name="Eichler E.E."/>
            <person name="Adams M.D."/>
            <person name="Hunkapiller M.W."/>
            <person name="Myers E.W."/>
            <person name="Venter J.C."/>
        </authorList>
    </citation>
    <scope>NUCLEOTIDE SEQUENCE [LARGE SCALE GENOMIC DNA]</scope>
</reference>
<reference key="4">
    <citation type="journal article" date="2004" name="Genome Res.">
        <title>The status, quality, and expansion of the NIH full-length cDNA project: the Mammalian Gene Collection (MGC).</title>
        <authorList>
            <consortium name="The MGC Project Team"/>
        </authorList>
    </citation>
    <scope>NUCLEOTIDE SEQUENCE [LARGE SCALE MRNA] (ISOFORMS 1 AND 2)</scope>
    <source>
        <tissue>Brain</tissue>
    </source>
</reference>
<reference key="5">
    <citation type="journal article" date="2011" name="BMC Syst. Biol.">
        <title>Initial characterization of the human central proteome.</title>
        <authorList>
            <person name="Burkard T.R."/>
            <person name="Planyavsky M."/>
            <person name="Kaupe I."/>
            <person name="Breitwieser F.P."/>
            <person name="Buerckstuemmer T."/>
            <person name="Bennett K.L."/>
            <person name="Superti-Furga G."/>
            <person name="Colinge J."/>
        </authorList>
    </citation>
    <scope>IDENTIFICATION BY MASS SPECTROMETRY [LARGE SCALE ANALYSIS]</scope>
</reference>
<sequence length="452" mass="50968">MLCGRPRSSSDNRNFLRERAGLSSAAVQTRIGNSAASRRSPAARPPVPAPPALPRGRPGTEGSTSLSAPAVLVVAVAVVVVVVSAVAWAMANYIHVPPGSPEVPKLNVTVQDQEEHRCREGALSLLQHLRPHWDPQEVTLQLFTDGITNKLIGCYVGNTMEDVVLVRIYGNKTELLVDRDEEVKSFRVLQAHGCAPQLYCTFNNGLCYEFIQGEALDPKHVCNPAIFRLIARQLAKIHAIHAHNGWIPKSNLWLKMGKYFSLIPTGFADEDINKRFLSDIPSSQILQEEMTWMKEILSNLGSPVVLCHNDLLCKNIIYNEKQGDVQFIDYEYSGYNYLAYDIGNHFNEFAGVSDVDYSLYPDRELQSQWLRAYLEAYKEFKGFGTEVTEKEVEILFIQVNQFALASHFFWGLWALIQAKYSTIEFDFLGYAIVRFNQYFKMKPEVTALKVPE</sequence>
<evidence type="ECO:0000256" key="1">
    <source>
        <dbReference type="SAM" id="MobiDB-lite"/>
    </source>
</evidence>
<evidence type="ECO:0000269" key="2">
    <source>
    </source>
</evidence>
<evidence type="ECO:0000303" key="3">
    <source>
    </source>
</evidence>
<evidence type="ECO:0000303" key="4">
    <source>
    </source>
</evidence>
<evidence type="ECO:0000305" key="5"/>
<evidence type="ECO:0000305" key="6">
    <source>
    </source>
</evidence>
<evidence type="ECO:0000312" key="7">
    <source>
        <dbReference type="HGNC" id="HGNC:24649"/>
    </source>
</evidence>